<proteinExistence type="inferred from homology"/>
<feature type="chain" id="PRO_0000187137" description="2-dehydro-3-deoxyphosphooctonate aldolase">
    <location>
        <begin position="1"/>
        <end position="274"/>
    </location>
</feature>
<name>KDSA_LEGPL</name>
<accession>Q5WXA7</accession>
<protein>
    <recommendedName>
        <fullName evidence="1">2-dehydro-3-deoxyphosphooctonate aldolase</fullName>
        <ecNumber evidence="1">2.5.1.55</ecNumber>
    </recommendedName>
    <alternativeName>
        <fullName evidence="1">3-deoxy-D-manno-octulosonic acid 8-phosphate synthase</fullName>
    </alternativeName>
    <alternativeName>
        <fullName evidence="1">KDO-8-phosphate synthase</fullName>
        <shortName evidence="1">KDO 8-P synthase</shortName>
        <shortName evidence="1">KDOPS</shortName>
    </alternativeName>
    <alternativeName>
        <fullName evidence="1">Phospho-2-dehydro-3-deoxyoctonate aldolase</fullName>
    </alternativeName>
</protein>
<comment type="catalytic activity">
    <reaction evidence="1">
        <text>D-arabinose 5-phosphate + phosphoenolpyruvate + H2O = 3-deoxy-alpha-D-manno-2-octulosonate-8-phosphate + phosphate</text>
        <dbReference type="Rhea" id="RHEA:14053"/>
        <dbReference type="ChEBI" id="CHEBI:15377"/>
        <dbReference type="ChEBI" id="CHEBI:43474"/>
        <dbReference type="ChEBI" id="CHEBI:57693"/>
        <dbReference type="ChEBI" id="CHEBI:58702"/>
        <dbReference type="ChEBI" id="CHEBI:85985"/>
        <dbReference type="EC" id="2.5.1.55"/>
    </reaction>
</comment>
<comment type="pathway">
    <text evidence="1">Carbohydrate biosynthesis; 3-deoxy-D-manno-octulosonate biosynthesis; 3-deoxy-D-manno-octulosonate from D-ribulose 5-phosphate: step 2/3.</text>
</comment>
<comment type="pathway">
    <text evidence="1">Bacterial outer membrane biogenesis; lipopolysaccharide biosynthesis.</text>
</comment>
<comment type="subcellular location">
    <subcellularLocation>
        <location evidence="1">Cytoplasm</location>
    </subcellularLocation>
</comment>
<comment type="similarity">
    <text evidence="1">Belongs to the KdsA family.</text>
</comment>
<keyword id="KW-0963">Cytoplasm</keyword>
<keyword id="KW-0448">Lipopolysaccharide biosynthesis</keyword>
<keyword id="KW-0808">Transferase</keyword>
<evidence type="ECO:0000255" key="1">
    <source>
        <dbReference type="HAMAP-Rule" id="MF_00056"/>
    </source>
</evidence>
<reference key="1">
    <citation type="journal article" date="2004" name="Nat. Genet.">
        <title>Evidence in the Legionella pneumophila genome for exploitation of host cell functions and high genome plasticity.</title>
        <authorList>
            <person name="Cazalet C."/>
            <person name="Rusniok C."/>
            <person name="Brueggemann H."/>
            <person name="Zidane N."/>
            <person name="Magnier A."/>
            <person name="Ma L."/>
            <person name="Tichit M."/>
            <person name="Jarraud S."/>
            <person name="Bouchier C."/>
            <person name="Vandenesch F."/>
            <person name="Kunst F."/>
            <person name="Etienne J."/>
            <person name="Glaser P."/>
            <person name="Buchrieser C."/>
        </authorList>
    </citation>
    <scope>NUCLEOTIDE SEQUENCE [LARGE SCALE GENOMIC DNA]</scope>
    <source>
        <strain>Lens</strain>
    </source>
</reference>
<organism>
    <name type="scientific">Legionella pneumophila (strain Lens)</name>
    <dbReference type="NCBI Taxonomy" id="297245"/>
    <lineage>
        <taxon>Bacteria</taxon>
        <taxon>Pseudomonadati</taxon>
        <taxon>Pseudomonadota</taxon>
        <taxon>Gammaproteobacteria</taxon>
        <taxon>Legionellales</taxon>
        <taxon>Legionellaceae</taxon>
        <taxon>Legionella</taxon>
    </lineage>
</organism>
<dbReference type="EC" id="2.5.1.55" evidence="1"/>
<dbReference type="EMBL" id="CR628337">
    <property type="protein sequence ID" value="CAH15430.1"/>
    <property type="molecule type" value="Genomic_DNA"/>
</dbReference>
<dbReference type="RefSeq" id="WP_011215285.1">
    <property type="nucleotide sequence ID" value="NC_006369.1"/>
</dbReference>
<dbReference type="SMR" id="Q5WXA7"/>
<dbReference type="KEGG" id="lpf:lpl1191"/>
<dbReference type="LegioList" id="lpl1191"/>
<dbReference type="HOGENOM" id="CLU_036666_0_0_6"/>
<dbReference type="UniPathway" id="UPA00030"/>
<dbReference type="UniPathway" id="UPA00357">
    <property type="reaction ID" value="UER00474"/>
</dbReference>
<dbReference type="Proteomes" id="UP000002517">
    <property type="component" value="Chromosome"/>
</dbReference>
<dbReference type="GO" id="GO:0005737">
    <property type="term" value="C:cytoplasm"/>
    <property type="evidence" value="ECO:0007669"/>
    <property type="project" value="UniProtKB-SubCell"/>
</dbReference>
<dbReference type="GO" id="GO:0008676">
    <property type="term" value="F:3-deoxy-8-phosphooctulonate synthase activity"/>
    <property type="evidence" value="ECO:0007669"/>
    <property type="project" value="UniProtKB-UniRule"/>
</dbReference>
<dbReference type="GO" id="GO:0019294">
    <property type="term" value="P:keto-3-deoxy-D-manno-octulosonic acid biosynthetic process"/>
    <property type="evidence" value="ECO:0007669"/>
    <property type="project" value="UniProtKB-UniRule"/>
</dbReference>
<dbReference type="Gene3D" id="3.20.20.70">
    <property type="entry name" value="Aldolase class I"/>
    <property type="match status" value="1"/>
</dbReference>
<dbReference type="HAMAP" id="MF_00056">
    <property type="entry name" value="KDO8P_synth"/>
    <property type="match status" value="1"/>
</dbReference>
<dbReference type="InterPro" id="IPR013785">
    <property type="entry name" value="Aldolase_TIM"/>
</dbReference>
<dbReference type="InterPro" id="IPR006218">
    <property type="entry name" value="DAHP1/KDSA"/>
</dbReference>
<dbReference type="InterPro" id="IPR006269">
    <property type="entry name" value="KDO8P_synthase"/>
</dbReference>
<dbReference type="NCBIfam" id="TIGR01362">
    <property type="entry name" value="KDO8P_synth"/>
    <property type="match status" value="1"/>
</dbReference>
<dbReference type="NCBIfam" id="NF003543">
    <property type="entry name" value="PRK05198.1"/>
    <property type="match status" value="1"/>
</dbReference>
<dbReference type="PANTHER" id="PTHR21057">
    <property type="entry name" value="PHOSPHO-2-DEHYDRO-3-DEOXYHEPTONATE ALDOLASE"/>
    <property type="match status" value="1"/>
</dbReference>
<dbReference type="Pfam" id="PF00793">
    <property type="entry name" value="DAHP_synth_1"/>
    <property type="match status" value="1"/>
</dbReference>
<dbReference type="SUPFAM" id="SSF51569">
    <property type="entry name" value="Aldolase"/>
    <property type="match status" value="1"/>
</dbReference>
<sequence>MRLCGFEAGLDKPLFLIAGPCVIESEELALETAGYLKEMCSQLNIPFIYKSSFDKANRSSISSYRGPGFEKGLSILEKVKSQIGVPVLTDVHEDTPLFEVSSVVDVLQTPAFLCRQTNFIQKVAAMNKPVNIKKGQFLAPWEMKHVIAKAKAQGNEQIMACERGVSFGYNNLVSDMRSLVIMRETGCPVVYDATHSVQLPGGNNGVSGGQREFIPALARAAVAVGISGLFMETHPDPDNALSDGPNSWPLDKMKQLLESLKAADEVYKKYSTDF</sequence>
<gene>
    <name evidence="1" type="primary">kdsA</name>
    <name type="ordered locus">lpl1191</name>
</gene>